<keyword id="KW-0175">Coiled coil</keyword>
<keyword id="KW-0221">Differentiation</keyword>
<keyword id="KW-0539">Nucleus</keyword>
<keyword id="KW-1185">Reference proteome</keyword>
<keyword id="KW-0744">Spermatogenesis</keyword>
<evidence type="ECO:0000255" key="1"/>
<evidence type="ECO:0000256" key="2">
    <source>
        <dbReference type="SAM" id="MobiDB-lite"/>
    </source>
</evidence>
<evidence type="ECO:0000269" key="3">
    <source>
    </source>
</evidence>
<reference key="1">
    <citation type="journal article" date="2005" name="Science">
        <title>The transcriptional landscape of the mammalian genome.</title>
        <authorList>
            <person name="Carninci P."/>
            <person name="Kasukawa T."/>
            <person name="Katayama S."/>
            <person name="Gough J."/>
            <person name="Frith M.C."/>
            <person name="Maeda N."/>
            <person name="Oyama R."/>
            <person name="Ravasi T."/>
            <person name="Lenhard B."/>
            <person name="Wells C."/>
            <person name="Kodzius R."/>
            <person name="Shimokawa K."/>
            <person name="Bajic V.B."/>
            <person name="Brenner S.E."/>
            <person name="Batalov S."/>
            <person name="Forrest A.R."/>
            <person name="Zavolan M."/>
            <person name="Davis M.J."/>
            <person name="Wilming L.G."/>
            <person name="Aidinis V."/>
            <person name="Allen J.E."/>
            <person name="Ambesi-Impiombato A."/>
            <person name="Apweiler R."/>
            <person name="Aturaliya R.N."/>
            <person name="Bailey T.L."/>
            <person name="Bansal M."/>
            <person name="Baxter L."/>
            <person name="Beisel K.W."/>
            <person name="Bersano T."/>
            <person name="Bono H."/>
            <person name="Chalk A.M."/>
            <person name="Chiu K.P."/>
            <person name="Choudhary V."/>
            <person name="Christoffels A."/>
            <person name="Clutterbuck D.R."/>
            <person name="Crowe M.L."/>
            <person name="Dalla E."/>
            <person name="Dalrymple B.P."/>
            <person name="de Bono B."/>
            <person name="Della Gatta G."/>
            <person name="di Bernardo D."/>
            <person name="Down T."/>
            <person name="Engstrom P."/>
            <person name="Fagiolini M."/>
            <person name="Faulkner G."/>
            <person name="Fletcher C.F."/>
            <person name="Fukushima T."/>
            <person name="Furuno M."/>
            <person name="Futaki S."/>
            <person name="Gariboldi M."/>
            <person name="Georgii-Hemming P."/>
            <person name="Gingeras T.R."/>
            <person name="Gojobori T."/>
            <person name="Green R.E."/>
            <person name="Gustincich S."/>
            <person name="Harbers M."/>
            <person name="Hayashi Y."/>
            <person name="Hensch T.K."/>
            <person name="Hirokawa N."/>
            <person name="Hill D."/>
            <person name="Huminiecki L."/>
            <person name="Iacono M."/>
            <person name="Ikeo K."/>
            <person name="Iwama A."/>
            <person name="Ishikawa T."/>
            <person name="Jakt M."/>
            <person name="Kanapin A."/>
            <person name="Katoh M."/>
            <person name="Kawasawa Y."/>
            <person name="Kelso J."/>
            <person name="Kitamura H."/>
            <person name="Kitano H."/>
            <person name="Kollias G."/>
            <person name="Krishnan S.P."/>
            <person name="Kruger A."/>
            <person name="Kummerfeld S.K."/>
            <person name="Kurochkin I.V."/>
            <person name="Lareau L.F."/>
            <person name="Lazarevic D."/>
            <person name="Lipovich L."/>
            <person name="Liu J."/>
            <person name="Liuni S."/>
            <person name="McWilliam S."/>
            <person name="Madan Babu M."/>
            <person name="Madera M."/>
            <person name="Marchionni L."/>
            <person name="Matsuda H."/>
            <person name="Matsuzawa S."/>
            <person name="Miki H."/>
            <person name="Mignone F."/>
            <person name="Miyake S."/>
            <person name="Morris K."/>
            <person name="Mottagui-Tabar S."/>
            <person name="Mulder N."/>
            <person name="Nakano N."/>
            <person name="Nakauchi H."/>
            <person name="Ng P."/>
            <person name="Nilsson R."/>
            <person name="Nishiguchi S."/>
            <person name="Nishikawa S."/>
            <person name="Nori F."/>
            <person name="Ohara O."/>
            <person name="Okazaki Y."/>
            <person name="Orlando V."/>
            <person name="Pang K.C."/>
            <person name="Pavan W.J."/>
            <person name="Pavesi G."/>
            <person name="Pesole G."/>
            <person name="Petrovsky N."/>
            <person name="Piazza S."/>
            <person name="Reed J."/>
            <person name="Reid J.F."/>
            <person name="Ring B.Z."/>
            <person name="Ringwald M."/>
            <person name="Rost B."/>
            <person name="Ruan Y."/>
            <person name="Salzberg S.L."/>
            <person name="Sandelin A."/>
            <person name="Schneider C."/>
            <person name="Schoenbach C."/>
            <person name="Sekiguchi K."/>
            <person name="Semple C.A."/>
            <person name="Seno S."/>
            <person name="Sessa L."/>
            <person name="Sheng Y."/>
            <person name="Shibata Y."/>
            <person name="Shimada H."/>
            <person name="Shimada K."/>
            <person name="Silva D."/>
            <person name="Sinclair B."/>
            <person name="Sperling S."/>
            <person name="Stupka E."/>
            <person name="Sugiura K."/>
            <person name="Sultana R."/>
            <person name="Takenaka Y."/>
            <person name="Taki K."/>
            <person name="Tammoja K."/>
            <person name="Tan S.L."/>
            <person name="Tang S."/>
            <person name="Taylor M.S."/>
            <person name="Tegner J."/>
            <person name="Teichmann S.A."/>
            <person name="Ueda H.R."/>
            <person name="van Nimwegen E."/>
            <person name="Verardo R."/>
            <person name="Wei C.L."/>
            <person name="Yagi K."/>
            <person name="Yamanishi H."/>
            <person name="Zabarovsky E."/>
            <person name="Zhu S."/>
            <person name="Zimmer A."/>
            <person name="Hide W."/>
            <person name="Bult C."/>
            <person name="Grimmond S.M."/>
            <person name="Teasdale R.D."/>
            <person name="Liu E.T."/>
            <person name="Brusic V."/>
            <person name="Quackenbush J."/>
            <person name="Wahlestedt C."/>
            <person name="Mattick J.S."/>
            <person name="Hume D.A."/>
            <person name="Kai C."/>
            <person name="Sasaki D."/>
            <person name="Tomaru Y."/>
            <person name="Fukuda S."/>
            <person name="Kanamori-Katayama M."/>
            <person name="Suzuki M."/>
            <person name="Aoki J."/>
            <person name="Arakawa T."/>
            <person name="Iida J."/>
            <person name="Imamura K."/>
            <person name="Itoh M."/>
            <person name="Kato T."/>
            <person name="Kawaji H."/>
            <person name="Kawagashira N."/>
            <person name="Kawashima T."/>
            <person name="Kojima M."/>
            <person name="Kondo S."/>
            <person name="Konno H."/>
            <person name="Nakano K."/>
            <person name="Ninomiya N."/>
            <person name="Nishio T."/>
            <person name="Okada M."/>
            <person name="Plessy C."/>
            <person name="Shibata K."/>
            <person name="Shiraki T."/>
            <person name="Suzuki S."/>
            <person name="Tagami M."/>
            <person name="Waki K."/>
            <person name="Watahiki A."/>
            <person name="Okamura-Oho Y."/>
            <person name="Suzuki H."/>
            <person name="Kawai J."/>
            <person name="Hayashizaki Y."/>
        </authorList>
    </citation>
    <scope>NUCLEOTIDE SEQUENCE [LARGE SCALE MRNA]</scope>
    <source>
        <strain>C57BL/6J</strain>
        <tissue>Testis</tissue>
    </source>
</reference>
<reference key="2">
    <citation type="journal article" date="2004" name="Genome Res.">
        <title>The status, quality, and expansion of the NIH full-length cDNA project: the Mammalian Gene Collection (MGC).</title>
        <authorList>
            <consortium name="The MGC Project Team"/>
        </authorList>
    </citation>
    <scope>NUCLEOTIDE SEQUENCE [LARGE SCALE MRNA]</scope>
</reference>
<reference key="3">
    <citation type="journal article" date="2023" name="Nat. Commun.">
        <title>Phase-separated CCER1 coordinates the histone-to-protamine transition and male fertility.</title>
        <authorList>
            <person name="Qin D."/>
            <person name="Gu Y."/>
            <person name="Zhang Y."/>
            <person name="Wang S."/>
            <person name="Jiang T."/>
            <person name="Wang Y."/>
            <person name="Wang C."/>
            <person name="Chen C."/>
            <person name="Zhang T."/>
            <person name="Xu W."/>
            <person name="Wang H."/>
            <person name="Zhang K."/>
            <person name="Hu L."/>
            <person name="Li L."/>
            <person name="Xie W."/>
            <person name="Wu X."/>
            <person name="Hu Z."/>
        </authorList>
    </citation>
    <scope>FUNCTION</scope>
    <scope>DISRUPTION PHENOTYPE</scope>
    <scope>TISSUE SPECIFICITY</scope>
    <scope>SUBCELLULAR LOCATION</scope>
</reference>
<sequence>MTQTVNEREDPLNLGGGGWASSIPLRTWSSYHRRQRGAPVSKRRYRDGPKIEYEASRKQPKQQRSPGSWFQPSRGPYWALYSNWERCGGPWRPPLIAFQSPLCPAQMIRAYGLHPLCVCCCSCWSGPWNPGWERPPGRKKRWGRRGRGLRRHPRRSFPRNPPIDLSKMLRPVNLSGWRAPGMRAPRNTTQFIMNQVYEDMRQQEKLERQQAALRAQQAQEGGISPGDSTTNDAPHSGVEEDSQLPEDLYGFMQDPSLTFSPALMQHNQSPTPGLVEEEEKNVDDDECDVEVCDEKEESEEEEEEEVDRGSEDEDVDEEEVEAAGNGEEGEEDQEEEYMLEETGLEEGEQRAEEKFLPLGMPLSILVGDEEERENFMNYDYLSQEQIIPNVPEADLFMVPDISH</sequence>
<comment type="function">
    <text evidence="3">Regulator of histone epigenetic modifications and chromatin compaction into the sperm head, required for histone-to-protamine (HTP) transition. HTP is a key event in which somatic histones are first replaced by testis-specific histone variants, then transition proteins (TNPs) are incorporated into the spermatid nucleus, and finally protamines (PRMs) replace the TNPs to promote chromatin condensation.</text>
</comment>
<comment type="subcellular location">
    <subcellularLocation>
        <location evidence="3">Nucleus</location>
    </subcellularLocation>
    <text evidence="3">Forms condensates in the nucleus through liquid-liquid phase separation.</text>
</comment>
<comment type="tissue specificity">
    <text evidence="3">Expressed in testis.</text>
</comment>
<comment type="disruption phenotype">
    <text evidence="3">Knockout male mice are infertile and have malformed spermatids, though testicular size and body/testicular weight ratio are comparable to those of their wild-type littermates. TNP1, TPN2, PRM1 and PRM2 expression is down-regulated in testes of knockout mice.</text>
</comment>
<organism>
    <name type="scientific">Mus musculus</name>
    <name type="common">Mouse</name>
    <dbReference type="NCBI Taxonomy" id="10090"/>
    <lineage>
        <taxon>Eukaryota</taxon>
        <taxon>Metazoa</taxon>
        <taxon>Chordata</taxon>
        <taxon>Craniata</taxon>
        <taxon>Vertebrata</taxon>
        <taxon>Euteleostomi</taxon>
        <taxon>Mammalia</taxon>
        <taxon>Eutheria</taxon>
        <taxon>Euarchontoglires</taxon>
        <taxon>Glires</taxon>
        <taxon>Rodentia</taxon>
        <taxon>Myomorpha</taxon>
        <taxon>Muroidea</taxon>
        <taxon>Muridae</taxon>
        <taxon>Murinae</taxon>
        <taxon>Mus</taxon>
        <taxon>Mus</taxon>
    </lineage>
</organism>
<gene>
    <name type="primary">Ccer1</name>
</gene>
<proteinExistence type="evidence at transcript level"/>
<feature type="chain" id="PRO_0000288858" description="Coiled-coil domain-containing glutamate-rich protein 1">
    <location>
        <begin position="1"/>
        <end position="403"/>
    </location>
</feature>
<feature type="region of interest" description="Disordered" evidence="2">
    <location>
        <begin position="1"/>
        <end position="23"/>
    </location>
</feature>
<feature type="region of interest" description="Disordered" evidence="2">
    <location>
        <begin position="51"/>
        <end position="70"/>
    </location>
</feature>
<feature type="region of interest" description="Disordered" evidence="2">
    <location>
        <begin position="134"/>
        <end position="164"/>
    </location>
</feature>
<feature type="region of interest" description="Disordered" evidence="2">
    <location>
        <begin position="202"/>
        <end position="241"/>
    </location>
</feature>
<feature type="region of interest" description="Disordered" evidence="2">
    <location>
        <begin position="261"/>
        <end position="350"/>
    </location>
</feature>
<feature type="coiled-coil region" evidence="1">
    <location>
        <begin position="292"/>
        <end position="353"/>
    </location>
</feature>
<feature type="compositionally biased region" description="Basic and acidic residues" evidence="2">
    <location>
        <begin position="1"/>
        <end position="11"/>
    </location>
</feature>
<feature type="compositionally biased region" description="Basic residues" evidence="2">
    <location>
        <begin position="137"/>
        <end position="157"/>
    </location>
</feature>
<feature type="compositionally biased region" description="Low complexity" evidence="2">
    <location>
        <begin position="209"/>
        <end position="220"/>
    </location>
</feature>
<feature type="compositionally biased region" description="Polar residues" evidence="2">
    <location>
        <begin position="261"/>
        <end position="271"/>
    </location>
</feature>
<feature type="compositionally biased region" description="Acidic residues" evidence="2">
    <location>
        <begin position="275"/>
        <end position="346"/>
    </location>
</feature>
<name>CCER1_MOUSE</name>
<dbReference type="EMBL" id="AK006212">
    <property type="protein sequence ID" value="BAB24462.1"/>
    <property type="molecule type" value="mRNA"/>
</dbReference>
<dbReference type="EMBL" id="AK014860">
    <property type="protein sequence ID" value="BAB29587.1"/>
    <property type="molecule type" value="mRNA"/>
</dbReference>
<dbReference type="EMBL" id="BC120881">
    <property type="protein sequence ID" value="AAI20882.1"/>
    <property type="molecule type" value="mRNA"/>
</dbReference>
<dbReference type="EMBL" id="BC120882">
    <property type="protein sequence ID" value="AAI20883.1"/>
    <property type="molecule type" value="mRNA"/>
</dbReference>
<dbReference type="CCDS" id="CCDS24144.1"/>
<dbReference type="RefSeq" id="NP_080000.1">
    <property type="nucleotide sequence ID" value="NM_025724.2"/>
</dbReference>
<dbReference type="SMR" id="Q9CQL2"/>
<dbReference type="FunCoup" id="Q9CQL2">
    <property type="interactions" value="7"/>
</dbReference>
<dbReference type="STRING" id="10090.ENSMUSP00000050554"/>
<dbReference type="GlyGen" id="Q9CQL2">
    <property type="glycosylation" value="1 site"/>
</dbReference>
<dbReference type="PhosphoSitePlus" id="Q9CQL2"/>
<dbReference type="PaxDb" id="10090-ENSMUSP00000050554"/>
<dbReference type="ProteomicsDB" id="281325"/>
<dbReference type="Antibodypedia" id="66707">
    <property type="antibodies" value="3 antibodies from 3 providers"/>
</dbReference>
<dbReference type="DNASU" id="66716"/>
<dbReference type="Ensembl" id="ENSMUST00000060703.6">
    <property type="protein sequence ID" value="ENSMUSP00000050554.5"/>
    <property type="gene ID" value="ENSMUSG00000047025.6"/>
</dbReference>
<dbReference type="GeneID" id="66716"/>
<dbReference type="KEGG" id="mmu:66716"/>
<dbReference type="UCSC" id="uc007gxd.1">
    <property type="organism name" value="mouse"/>
</dbReference>
<dbReference type="AGR" id="MGI:1913966"/>
<dbReference type="CTD" id="196477"/>
<dbReference type="MGI" id="MGI:1913966">
    <property type="gene designation" value="Ccer1"/>
</dbReference>
<dbReference type="VEuPathDB" id="HostDB:ENSMUSG00000047025"/>
<dbReference type="eggNOG" id="ENOG502S11C">
    <property type="taxonomic scope" value="Eukaryota"/>
</dbReference>
<dbReference type="GeneTree" id="ENSGT00730000111529"/>
<dbReference type="HOGENOM" id="CLU_794441_0_0_1"/>
<dbReference type="InParanoid" id="Q9CQL2"/>
<dbReference type="OMA" id="PLCFCCC"/>
<dbReference type="OrthoDB" id="9451863at2759"/>
<dbReference type="PhylomeDB" id="Q9CQL2"/>
<dbReference type="BioGRID-ORCS" id="66716">
    <property type="hits" value="2 hits in 75 CRISPR screens"/>
</dbReference>
<dbReference type="PRO" id="PR:Q9CQL2"/>
<dbReference type="Proteomes" id="UP000000589">
    <property type="component" value="Chromosome 10"/>
</dbReference>
<dbReference type="RNAct" id="Q9CQL2">
    <property type="molecule type" value="protein"/>
</dbReference>
<dbReference type="Bgee" id="ENSMUSG00000047025">
    <property type="expression patterns" value="Expressed in seminiferous tubule of testis and 22 other cell types or tissues"/>
</dbReference>
<dbReference type="GO" id="GO:0005634">
    <property type="term" value="C:nucleus"/>
    <property type="evidence" value="ECO:0000315"/>
    <property type="project" value="UniProtKB"/>
</dbReference>
<dbReference type="GO" id="GO:0035092">
    <property type="term" value="P:sperm DNA condensation"/>
    <property type="evidence" value="ECO:0000315"/>
    <property type="project" value="UniProtKB"/>
</dbReference>
<dbReference type="GO" id="GO:0007283">
    <property type="term" value="P:spermatogenesis"/>
    <property type="evidence" value="ECO:0000315"/>
    <property type="project" value="UniProtKB"/>
</dbReference>
<dbReference type="InterPro" id="IPR027889">
    <property type="entry name" value="CCER1"/>
</dbReference>
<dbReference type="InterPro" id="IPR052696">
    <property type="entry name" value="Coiled-coil_domain"/>
</dbReference>
<dbReference type="PANTHER" id="PTHR37337">
    <property type="entry name" value="COILED-COIL DOMAIN-CONTAINING GLUTAMATE-RICH PROTEIN 1"/>
    <property type="match status" value="1"/>
</dbReference>
<dbReference type="PANTHER" id="PTHR37337:SF1">
    <property type="entry name" value="COILED-COIL DOMAIN-CONTAINING GLUTAMATE-RICH PROTEIN 1"/>
    <property type="match status" value="1"/>
</dbReference>
<dbReference type="Pfam" id="PF15482">
    <property type="entry name" value="CCER1"/>
    <property type="match status" value="1"/>
</dbReference>
<protein>
    <recommendedName>
        <fullName>Coiled-coil domain-containing glutamate-rich protein 1</fullName>
    </recommendedName>
</protein>
<accession>Q9CQL2</accession>